<name>RSMH_PROM4</name>
<protein>
    <recommendedName>
        <fullName evidence="1">Ribosomal RNA small subunit methyltransferase H</fullName>
        <ecNumber evidence="1">2.1.1.199</ecNumber>
    </recommendedName>
    <alternativeName>
        <fullName evidence="1">16S rRNA m(4)C1402 methyltransferase</fullName>
    </alternativeName>
    <alternativeName>
        <fullName evidence="1">rRNA (cytosine-N(4)-)-methyltransferase RsmH</fullName>
    </alternativeName>
</protein>
<gene>
    <name evidence="1" type="primary">rsmH</name>
    <name type="synonym">mraW</name>
    <name type="ordered locus">P9211_01891</name>
</gene>
<proteinExistence type="inferred from homology"/>
<accession>A9BD32</accession>
<evidence type="ECO:0000255" key="1">
    <source>
        <dbReference type="HAMAP-Rule" id="MF_01007"/>
    </source>
</evidence>
<comment type="function">
    <text evidence="1">Specifically methylates the N4 position of cytidine in position 1402 (C1402) of 16S rRNA.</text>
</comment>
<comment type="catalytic activity">
    <reaction evidence="1">
        <text>cytidine(1402) in 16S rRNA + S-adenosyl-L-methionine = N(4)-methylcytidine(1402) in 16S rRNA + S-adenosyl-L-homocysteine + H(+)</text>
        <dbReference type="Rhea" id="RHEA:42928"/>
        <dbReference type="Rhea" id="RHEA-COMP:10286"/>
        <dbReference type="Rhea" id="RHEA-COMP:10287"/>
        <dbReference type="ChEBI" id="CHEBI:15378"/>
        <dbReference type="ChEBI" id="CHEBI:57856"/>
        <dbReference type="ChEBI" id="CHEBI:59789"/>
        <dbReference type="ChEBI" id="CHEBI:74506"/>
        <dbReference type="ChEBI" id="CHEBI:82748"/>
        <dbReference type="EC" id="2.1.1.199"/>
    </reaction>
</comment>
<comment type="subcellular location">
    <subcellularLocation>
        <location evidence="1">Cytoplasm</location>
    </subcellularLocation>
</comment>
<comment type="similarity">
    <text evidence="1">Belongs to the methyltransferase superfamily. RsmH family.</text>
</comment>
<reference key="1">
    <citation type="journal article" date="2007" name="PLoS Genet.">
        <title>Patterns and implications of gene gain and loss in the evolution of Prochlorococcus.</title>
        <authorList>
            <person name="Kettler G.C."/>
            <person name="Martiny A.C."/>
            <person name="Huang K."/>
            <person name="Zucker J."/>
            <person name="Coleman M.L."/>
            <person name="Rodrigue S."/>
            <person name="Chen F."/>
            <person name="Lapidus A."/>
            <person name="Ferriera S."/>
            <person name="Johnson J."/>
            <person name="Steglich C."/>
            <person name="Church G.M."/>
            <person name="Richardson P."/>
            <person name="Chisholm S.W."/>
        </authorList>
    </citation>
    <scope>NUCLEOTIDE SEQUENCE [LARGE SCALE GENOMIC DNA]</scope>
    <source>
        <strain>MIT 9211</strain>
    </source>
</reference>
<keyword id="KW-0963">Cytoplasm</keyword>
<keyword id="KW-0489">Methyltransferase</keyword>
<keyword id="KW-1185">Reference proteome</keyword>
<keyword id="KW-0698">rRNA processing</keyword>
<keyword id="KW-0949">S-adenosyl-L-methionine</keyword>
<keyword id="KW-0808">Transferase</keyword>
<organism>
    <name type="scientific">Prochlorococcus marinus (strain MIT 9211)</name>
    <dbReference type="NCBI Taxonomy" id="93059"/>
    <lineage>
        <taxon>Bacteria</taxon>
        <taxon>Bacillati</taxon>
        <taxon>Cyanobacteriota</taxon>
        <taxon>Cyanophyceae</taxon>
        <taxon>Synechococcales</taxon>
        <taxon>Prochlorococcaceae</taxon>
        <taxon>Prochlorococcus</taxon>
    </lineage>
</organism>
<dbReference type="EC" id="2.1.1.199" evidence="1"/>
<dbReference type="EMBL" id="CP000878">
    <property type="protein sequence ID" value="ABX08120.1"/>
    <property type="molecule type" value="Genomic_DNA"/>
</dbReference>
<dbReference type="RefSeq" id="WP_012194745.1">
    <property type="nucleotide sequence ID" value="NC_009976.1"/>
</dbReference>
<dbReference type="SMR" id="A9BD32"/>
<dbReference type="STRING" id="93059.P9211_01891"/>
<dbReference type="KEGG" id="pmj:P9211_01891"/>
<dbReference type="eggNOG" id="COG0275">
    <property type="taxonomic scope" value="Bacteria"/>
</dbReference>
<dbReference type="HOGENOM" id="CLU_038422_3_0_3"/>
<dbReference type="OrthoDB" id="9806637at2"/>
<dbReference type="Proteomes" id="UP000000788">
    <property type="component" value="Chromosome"/>
</dbReference>
<dbReference type="GO" id="GO:0005737">
    <property type="term" value="C:cytoplasm"/>
    <property type="evidence" value="ECO:0007669"/>
    <property type="project" value="UniProtKB-SubCell"/>
</dbReference>
<dbReference type="GO" id="GO:0071424">
    <property type="term" value="F:rRNA (cytosine-N4-)-methyltransferase activity"/>
    <property type="evidence" value="ECO:0007669"/>
    <property type="project" value="UniProtKB-UniRule"/>
</dbReference>
<dbReference type="GO" id="GO:0070475">
    <property type="term" value="P:rRNA base methylation"/>
    <property type="evidence" value="ECO:0007669"/>
    <property type="project" value="UniProtKB-UniRule"/>
</dbReference>
<dbReference type="Gene3D" id="1.10.150.170">
    <property type="entry name" value="Putative methyltransferase TM0872, insert domain"/>
    <property type="match status" value="1"/>
</dbReference>
<dbReference type="Gene3D" id="3.40.50.150">
    <property type="entry name" value="Vaccinia Virus protein VP39"/>
    <property type="match status" value="1"/>
</dbReference>
<dbReference type="HAMAP" id="MF_01007">
    <property type="entry name" value="16SrRNA_methyltr_H"/>
    <property type="match status" value="1"/>
</dbReference>
<dbReference type="InterPro" id="IPR002903">
    <property type="entry name" value="RsmH"/>
</dbReference>
<dbReference type="InterPro" id="IPR023397">
    <property type="entry name" value="SAM-dep_MeTrfase_MraW_recog"/>
</dbReference>
<dbReference type="InterPro" id="IPR029063">
    <property type="entry name" value="SAM-dependent_MTases_sf"/>
</dbReference>
<dbReference type="NCBIfam" id="TIGR00006">
    <property type="entry name" value="16S rRNA (cytosine(1402)-N(4))-methyltransferase RsmH"/>
    <property type="match status" value="1"/>
</dbReference>
<dbReference type="PANTHER" id="PTHR11265:SF0">
    <property type="entry name" value="12S RRNA N4-METHYLCYTIDINE METHYLTRANSFERASE"/>
    <property type="match status" value="1"/>
</dbReference>
<dbReference type="PANTHER" id="PTHR11265">
    <property type="entry name" value="S-ADENOSYL-METHYLTRANSFERASE MRAW"/>
    <property type="match status" value="1"/>
</dbReference>
<dbReference type="Pfam" id="PF01795">
    <property type="entry name" value="Methyltransf_5"/>
    <property type="match status" value="1"/>
</dbReference>
<dbReference type="PIRSF" id="PIRSF004486">
    <property type="entry name" value="MraW"/>
    <property type="match status" value="1"/>
</dbReference>
<dbReference type="SUPFAM" id="SSF81799">
    <property type="entry name" value="Putative methyltransferase TM0872, insert domain"/>
    <property type="match status" value="1"/>
</dbReference>
<dbReference type="SUPFAM" id="SSF53335">
    <property type="entry name" value="S-adenosyl-L-methionine-dependent methyltransferases"/>
    <property type="match status" value="1"/>
</dbReference>
<feature type="chain" id="PRO_1000134764" description="Ribosomal RNA small subunit methyltransferase H">
    <location>
        <begin position="1"/>
        <end position="305"/>
    </location>
</feature>
<feature type="binding site" evidence="1">
    <location>
        <begin position="47"/>
        <end position="49"/>
    </location>
    <ligand>
        <name>S-adenosyl-L-methionine</name>
        <dbReference type="ChEBI" id="CHEBI:59789"/>
    </ligand>
</feature>
<feature type="binding site" evidence="1">
    <location>
        <position position="66"/>
    </location>
    <ligand>
        <name>S-adenosyl-L-methionine</name>
        <dbReference type="ChEBI" id="CHEBI:59789"/>
    </ligand>
</feature>
<feature type="binding site" evidence="1">
    <location>
        <position position="93"/>
    </location>
    <ligand>
        <name>S-adenosyl-L-methionine</name>
        <dbReference type="ChEBI" id="CHEBI:59789"/>
    </ligand>
</feature>
<feature type="binding site" evidence="1">
    <location>
        <position position="108"/>
    </location>
    <ligand>
        <name>S-adenosyl-L-methionine</name>
        <dbReference type="ChEBI" id="CHEBI:59789"/>
    </ligand>
</feature>
<feature type="binding site" evidence="1">
    <location>
        <position position="115"/>
    </location>
    <ligand>
        <name>S-adenosyl-L-methionine</name>
        <dbReference type="ChEBI" id="CHEBI:59789"/>
    </ligand>
</feature>
<sequence>MKDKVNVATSTFNHTPVLANELIEIIKKLPEDLIKNCLIIDATIGGGGHSSLVLETFPGISVIGLDQDPKAVAAASEHLKIFGDRAKIETTNFSNFTPSKKVAMVFADLGVSSPQLDEGSRGFSFRLNGPLDMRMNQIDGTNAAELIDRLSENELANLIFKYGEERFSRRIAKRIKHDLAKQGPYSGTIALAYAIAGCYPPKLRNRRVHPATKTFQALRIAINHELDVLSVLLKKAPEWLLDDGLFAVISFHSLEDRLVKKSFLTDTRLERITRKPLIATTNEISINPRSRSAKMRVARRIEAIK</sequence>